<name>THIM_SALPC</name>
<keyword id="KW-0067">ATP-binding</keyword>
<keyword id="KW-0418">Kinase</keyword>
<keyword id="KW-0460">Magnesium</keyword>
<keyword id="KW-0479">Metal-binding</keyword>
<keyword id="KW-0547">Nucleotide-binding</keyword>
<keyword id="KW-0784">Thiamine biosynthesis</keyword>
<keyword id="KW-0808">Transferase</keyword>
<proteinExistence type="inferred from homology"/>
<gene>
    <name evidence="1" type="primary">thiM</name>
    <name type="ordered locus">SPC_1556</name>
</gene>
<accession>C0Q0Y8</accession>
<feature type="chain" id="PRO_1000198129" description="Hydroxyethylthiazole kinase">
    <location>
        <begin position="1"/>
        <end position="265"/>
    </location>
</feature>
<feature type="binding site" evidence="1">
    <location>
        <position position="50"/>
    </location>
    <ligand>
        <name>substrate</name>
    </ligand>
</feature>
<feature type="binding site" evidence="1">
    <location>
        <position position="125"/>
    </location>
    <ligand>
        <name>ATP</name>
        <dbReference type="ChEBI" id="CHEBI:30616"/>
    </ligand>
</feature>
<feature type="binding site" evidence="1">
    <location>
        <position position="171"/>
    </location>
    <ligand>
        <name>ATP</name>
        <dbReference type="ChEBI" id="CHEBI:30616"/>
    </ligand>
</feature>
<feature type="binding site" evidence="1">
    <location>
        <position position="198"/>
    </location>
    <ligand>
        <name>substrate</name>
    </ligand>
</feature>
<protein>
    <recommendedName>
        <fullName evidence="1">Hydroxyethylthiazole kinase</fullName>
        <ecNumber evidence="1">2.7.1.50</ecNumber>
    </recommendedName>
    <alternativeName>
        <fullName evidence="1">4-methyl-5-beta-hydroxyethylthiazole kinase</fullName>
        <shortName evidence="1">TH kinase</shortName>
        <shortName evidence="1">Thz kinase</shortName>
    </alternativeName>
</protein>
<comment type="function">
    <text evidence="1">Catalyzes the phosphorylation of the hydroxyl group of 4-methyl-5-beta-hydroxyethylthiazole (THZ).</text>
</comment>
<comment type="catalytic activity">
    <reaction evidence="1">
        <text>5-(2-hydroxyethyl)-4-methylthiazole + ATP = 4-methyl-5-(2-phosphooxyethyl)-thiazole + ADP + H(+)</text>
        <dbReference type="Rhea" id="RHEA:24212"/>
        <dbReference type="ChEBI" id="CHEBI:15378"/>
        <dbReference type="ChEBI" id="CHEBI:17957"/>
        <dbReference type="ChEBI" id="CHEBI:30616"/>
        <dbReference type="ChEBI" id="CHEBI:58296"/>
        <dbReference type="ChEBI" id="CHEBI:456216"/>
        <dbReference type="EC" id="2.7.1.50"/>
    </reaction>
</comment>
<comment type="cofactor">
    <cofactor evidence="1">
        <name>Mg(2+)</name>
        <dbReference type="ChEBI" id="CHEBI:18420"/>
    </cofactor>
</comment>
<comment type="pathway">
    <text evidence="1">Cofactor biosynthesis; thiamine diphosphate biosynthesis; 4-methyl-5-(2-phosphoethyl)-thiazole from 5-(2-hydroxyethyl)-4-methylthiazole: step 1/1.</text>
</comment>
<comment type="similarity">
    <text evidence="1">Belongs to the Thz kinase family.</text>
</comment>
<sequence>MQPDLHCRTLAAHTLKHFRALSPLTHCMTNDVVQTFTANTLLALGASPAMVIDPVEARPFAAIANALLVNVGTLTASRADAMRAAVESAYDAKTPWTLDPVAVGALEFRRRFCLDLLSLRPAAIRGNASEILALSGMALGGRGVDTTEAALAALPAAQALAHQIDCIVVVTREIDYVTNGQRTLSIPGGDPLMTRIVGTGCALSAVVAASCALPGAALDNVASACCWMKLAGQAAAERSEGPGSFIPAFLDALYHLDVEAANEEN</sequence>
<organism>
    <name type="scientific">Salmonella paratyphi C (strain RKS4594)</name>
    <dbReference type="NCBI Taxonomy" id="476213"/>
    <lineage>
        <taxon>Bacteria</taxon>
        <taxon>Pseudomonadati</taxon>
        <taxon>Pseudomonadota</taxon>
        <taxon>Gammaproteobacteria</taxon>
        <taxon>Enterobacterales</taxon>
        <taxon>Enterobacteriaceae</taxon>
        <taxon>Salmonella</taxon>
    </lineage>
</organism>
<dbReference type="EC" id="2.7.1.50" evidence="1"/>
<dbReference type="EMBL" id="CP000857">
    <property type="protein sequence ID" value="ACN45707.1"/>
    <property type="molecule type" value="Genomic_DNA"/>
</dbReference>
<dbReference type="RefSeq" id="WP_001182162.1">
    <property type="nucleotide sequence ID" value="NC_012125.1"/>
</dbReference>
<dbReference type="SMR" id="C0Q0Y8"/>
<dbReference type="KEGG" id="sei:SPC_1556"/>
<dbReference type="HOGENOM" id="CLU_019943_0_1_6"/>
<dbReference type="UniPathway" id="UPA00060">
    <property type="reaction ID" value="UER00139"/>
</dbReference>
<dbReference type="Proteomes" id="UP000001599">
    <property type="component" value="Chromosome"/>
</dbReference>
<dbReference type="GO" id="GO:0005524">
    <property type="term" value="F:ATP binding"/>
    <property type="evidence" value="ECO:0007669"/>
    <property type="project" value="UniProtKB-UniRule"/>
</dbReference>
<dbReference type="GO" id="GO:0004417">
    <property type="term" value="F:hydroxyethylthiazole kinase activity"/>
    <property type="evidence" value="ECO:0007669"/>
    <property type="project" value="UniProtKB-UniRule"/>
</dbReference>
<dbReference type="GO" id="GO:0000287">
    <property type="term" value="F:magnesium ion binding"/>
    <property type="evidence" value="ECO:0007669"/>
    <property type="project" value="UniProtKB-UniRule"/>
</dbReference>
<dbReference type="GO" id="GO:0009228">
    <property type="term" value="P:thiamine biosynthetic process"/>
    <property type="evidence" value="ECO:0007669"/>
    <property type="project" value="UniProtKB-KW"/>
</dbReference>
<dbReference type="GO" id="GO:0009229">
    <property type="term" value="P:thiamine diphosphate biosynthetic process"/>
    <property type="evidence" value="ECO:0007669"/>
    <property type="project" value="UniProtKB-UniRule"/>
</dbReference>
<dbReference type="CDD" id="cd01170">
    <property type="entry name" value="THZ_kinase"/>
    <property type="match status" value="1"/>
</dbReference>
<dbReference type="FunFam" id="3.40.1190.20:FF:000015">
    <property type="entry name" value="Hydroxyethylthiazole kinase"/>
    <property type="match status" value="1"/>
</dbReference>
<dbReference type="Gene3D" id="3.40.1190.20">
    <property type="match status" value="1"/>
</dbReference>
<dbReference type="HAMAP" id="MF_00228">
    <property type="entry name" value="Thz_kinase"/>
    <property type="match status" value="1"/>
</dbReference>
<dbReference type="InterPro" id="IPR000417">
    <property type="entry name" value="Hyethyz_kinase"/>
</dbReference>
<dbReference type="InterPro" id="IPR029056">
    <property type="entry name" value="Ribokinase-like"/>
</dbReference>
<dbReference type="NCBIfam" id="NF006830">
    <property type="entry name" value="PRK09355.1"/>
    <property type="match status" value="1"/>
</dbReference>
<dbReference type="NCBIfam" id="TIGR00694">
    <property type="entry name" value="thiM"/>
    <property type="match status" value="1"/>
</dbReference>
<dbReference type="Pfam" id="PF02110">
    <property type="entry name" value="HK"/>
    <property type="match status" value="1"/>
</dbReference>
<dbReference type="PIRSF" id="PIRSF000513">
    <property type="entry name" value="Thz_kinase"/>
    <property type="match status" value="1"/>
</dbReference>
<dbReference type="PRINTS" id="PR01099">
    <property type="entry name" value="HYETHTZKNASE"/>
</dbReference>
<dbReference type="SUPFAM" id="SSF53613">
    <property type="entry name" value="Ribokinase-like"/>
    <property type="match status" value="1"/>
</dbReference>
<reference key="1">
    <citation type="journal article" date="2009" name="PLoS ONE">
        <title>Salmonella paratyphi C: genetic divergence from Salmonella choleraesuis and pathogenic convergence with Salmonella typhi.</title>
        <authorList>
            <person name="Liu W.-Q."/>
            <person name="Feng Y."/>
            <person name="Wang Y."/>
            <person name="Zou Q.-H."/>
            <person name="Chen F."/>
            <person name="Guo J.-T."/>
            <person name="Peng Y.-H."/>
            <person name="Jin Y."/>
            <person name="Li Y.-G."/>
            <person name="Hu S.-N."/>
            <person name="Johnston R.N."/>
            <person name="Liu G.-R."/>
            <person name="Liu S.-L."/>
        </authorList>
    </citation>
    <scope>NUCLEOTIDE SEQUENCE [LARGE SCALE GENOMIC DNA]</scope>
    <source>
        <strain>RKS4594</strain>
    </source>
</reference>
<evidence type="ECO:0000255" key="1">
    <source>
        <dbReference type="HAMAP-Rule" id="MF_00228"/>
    </source>
</evidence>